<protein>
    <recommendedName>
        <fullName>Solute carrier family 40 member 2, chloroplastic</fullName>
    </recommendedName>
</protein>
<gene>
    <name type="ordered locus">Os12g0562100</name>
    <name type="ordered locus">LOC_Os12g37530</name>
</gene>
<accession>Q2QNK7</accession>
<accession>A0A0P0YBB2</accession>
<accession>Q2QNK5</accession>
<accession>Q2QNK6</accession>
<dbReference type="EMBL" id="DP000011">
    <property type="protein sequence ID" value="ABA98946.1"/>
    <property type="molecule type" value="Genomic_DNA"/>
</dbReference>
<dbReference type="EMBL" id="DP000011">
    <property type="protein sequence ID" value="ABA98947.1"/>
    <property type="molecule type" value="Genomic_DNA"/>
</dbReference>
<dbReference type="EMBL" id="DP000011">
    <property type="protein sequence ID" value="ABA98948.1"/>
    <property type="status" value="ALT_SEQ"/>
    <property type="molecule type" value="Genomic_DNA"/>
</dbReference>
<dbReference type="EMBL" id="AP008218">
    <property type="protein sequence ID" value="BAF30045.1"/>
    <property type="molecule type" value="Genomic_DNA"/>
</dbReference>
<dbReference type="EMBL" id="AP014968">
    <property type="protein sequence ID" value="BAT17649.1"/>
    <property type="molecule type" value="Genomic_DNA"/>
</dbReference>
<dbReference type="EMBL" id="AP014968">
    <property type="protein sequence ID" value="BAT17650.1"/>
    <property type="molecule type" value="Genomic_DNA"/>
</dbReference>
<dbReference type="EMBL" id="AK064831">
    <property type="protein sequence ID" value="BAG89229.1"/>
    <property type="molecule type" value="mRNA"/>
</dbReference>
<dbReference type="EMBL" id="AK065844">
    <property type="protein sequence ID" value="BAG89702.1"/>
    <property type="molecule type" value="mRNA"/>
</dbReference>
<dbReference type="RefSeq" id="XP_015620078.1">
    <property type="nucleotide sequence ID" value="XM_015764592.1"/>
</dbReference>
<dbReference type="SMR" id="Q2QNK7"/>
<dbReference type="FunCoup" id="Q2QNK7">
    <property type="interactions" value="703"/>
</dbReference>
<dbReference type="STRING" id="39947.Q2QNK7"/>
<dbReference type="PaxDb" id="39947-Q2QNK7"/>
<dbReference type="EnsemblPlants" id="Os12t0562100-01">
    <molecule id="Q2QNK7-1"/>
    <property type="protein sequence ID" value="Os12t0562100-01"/>
    <property type="gene ID" value="Os12g0562100"/>
</dbReference>
<dbReference type="Gramene" id="Os12t0562100-01">
    <molecule id="Q2QNK7-1"/>
    <property type="protein sequence ID" value="Os12t0562100-01"/>
    <property type="gene ID" value="Os12g0562100"/>
</dbReference>
<dbReference type="KEGG" id="dosa:Os12g0562100"/>
<dbReference type="eggNOG" id="KOG2601">
    <property type="taxonomic scope" value="Eukaryota"/>
</dbReference>
<dbReference type="InParanoid" id="Q2QNK7"/>
<dbReference type="OMA" id="WTGSISQ"/>
<dbReference type="OrthoDB" id="648861at2759"/>
<dbReference type="Proteomes" id="UP000000763">
    <property type="component" value="Chromosome 12"/>
</dbReference>
<dbReference type="Proteomes" id="UP000059680">
    <property type="component" value="Chromosome 12"/>
</dbReference>
<dbReference type="GO" id="GO:0009941">
    <property type="term" value="C:chloroplast envelope"/>
    <property type="evidence" value="ECO:0007669"/>
    <property type="project" value="UniProtKB-SubCell"/>
</dbReference>
<dbReference type="GO" id="GO:0016020">
    <property type="term" value="C:membrane"/>
    <property type="evidence" value="ECO:0007669"/>
    <property type="project" value="UniProtKB-SubCell"/>
</dbReference>
<dbReference type="GO" id="GO:0005381">
    <property type="term" value="F:iron ion transmembrane transporter activity"/>
    <property type="evidence" value="ECO:0007669"/>
    <property type="project" value="InterPro"/>
</dbReference>
<dbReference type="GO" id="GO:0006826">
    <property type="term" value="P:iron ion transport"/>
    <property type="evidence" value="ECO:0000318"/>
    <property type="project" value="GO_Central"/>
</dbReference>
<dbReference type="CDD" id="cd17480">
    <property type="entry name" value="MFS_SLC40A1_like"/>
    <property type="match status" value="1"/>
</dbReference>
<dbReference type="Gene3D" id="1.20.1250.20">
    <property type="entry name" value="MFS general substrate transporter like domains"/>
    <property type="match status" value="1"/>
</dbReference>
<dbReference type="InterPro" id="IPR009716">
    <property type="entry name" value="Ferroportin-1"/>
</dbReference>
<dbReference type="InterPro" id="IPR036259">
    <property type="entry name" value="MFS_trans_sf"/>
</dbReference>
<dbReference type="PANTHER" id="PTHR11660">
    <property type="entry name" value="SOLUTE CARRIER FAMILY 40 MEMBER"/>
    <property type="match status" value="1"/>
</dbReference>
<dbReference type="PANTHER" id="PTHR11660:SF53">
    <property type="entry name" value="SOLUTE CARRIER FAMILY 40 MEMBER 3, CHLOROPLASTIC"/>
    <property type="match status" value="1"/>
</dbReference>
<dbReference type="Pfam" id="PF06963">
    <property type="entry name" value="FPN1"/>
    <property type="match status" value="1"/>
</dbReference>
<dbReference type="SUPFAM" id="SSF103473">
    <property type="entry name" value="MFS general substrate transporter"/>
    <property type="match status" value="1"/>
</dbReference>
<organism>
    <name type="scientific">Oryza sativa subsp. japonica</name>
    <name type="common">Rice</name>
    <dbReference type="NCBI Taxonomy" id="39947"/>
    <lineage>
        <taxon>Eukaryota</taxon>
        <taxon>Viridiplantae</taxon>
        <taxon>Streptophyta</taxon>
        <taxon>Embryophyta</taxon>
        <taxon>Tracheophyta</taxon>
        <taxon>Spermatophyta</taxon>
        <taxon>Magnoliopsida</taxon>
        <taxon>Liliopsida</taxon>
        <taxon>Poales</taxon>
        <taxon>Poaceae</taxon>
        <taxon>BOP clade</taxon>
        <taxon>Oryzoideae</taxon>
        <taxon>Oryzeae</taxon>
        <taxon>Oryzinae</taxon>
        <taxon>Oryza</taxon>
        <taxon>Oryza sativa</taxon>
    </lineage>
</organism>
<sequence>MGMVTATAAAALLASPPQGHLGRRCHLVVPGLRLRPPASSSPPHAAPPLRLSNFVPRCYITNVEVDVSHTSEQEALDDHPPLLPACAIPVVHLRDVPDASPFPLHESASHSTDFEELPVLSEGELHTIAATPAHPAGLYALYASYLFGNLVEQLWNFAWPAALAILHPSLLPVAIVGFFTKLSVFIGAPIVGKLMDHFPRIPMYTGLNAVQVATQLISAAMVIYAMKNVTHASTSAVVLKPWFIALVAAGAIERLAGLALGVAMERDWVVLLAGTNRPVALAQANAVLNRLDLVCETVGASVFGLLLSKYHPVTCLKIACGLMICSFPVLVVLGQLINRFSCHALDSSRTPSEESICANLLDVRKIVQNGLSAIRNGWNEYKQQTVLPASVATVFLNFNVALAPGAIMTALLMHRGISPSIVGAFSGLCSIMGLVATFISSSLVERVGILKAGAAGLIVQASLLSVALVVYWTGSISQRTPLLIFLAAIALSRLGHMSYDVVGTQILQTGVPASKANLIGGMEVSISSLAELVMLGMAIIANDVSHFGFLAILSVSSVAGAAWMFCQWLGNPTDEQRELFMFDPHFQVEPI</sequence>
<name>S40A2_ORYSJ</name>
<feature type="transit peptide" description="Chloroplast" evidence="2">
    <location>
        <begin position="1"/>
        <end position="66"/>
    </location>
</feature>
<feature type="chain" id="PRO_0000415902" description="Solute carrier family 40 member 2, chloroplastic">
    <location>
        <begin position="67"/>
        <end position="591"/>
    </location>
</feature>
<feature type="transmembrane region" description="Helical" evidence="2">
    <location>
        <begin position="159"/>
        <end position="179"/>
    </location>
</feature>
<feature type="transmembrane region" description="Helical" evidence="2">
    <location>
        <begin position="206"/>
        <end position="226"/>
    </location>
</feature>
<feature type="transmembrane region" description="Helical" evidence="2">
    <location>
        <begin position="242"/>
        <end position="262"/>
    </location>
</feature>
<feature type="transmembrane region" description="Helical" evidence="2">
    <location>
        <begin position="293"/>
        <end position="313"/>
    </location>
</feature>
<feature type="transmembrane region" description="Helical" evidence="2">
    <location>
        <begin position="318"/>
        <end position="338"/>
    </location>
</feature>
<feature type="transmembrane region" description="Helical" evidence="2">
    <location>
        <begin position="391"/>
        <end position="411"/>
    </location>
</feature>
<feature type="transmembrane region" description="Helical" evidence="2">
    <location>
        <begin position="419"/>
        <end position="439"/>
    </location>
</feature>
<feature type="transmembrane region" description="Helical" evidence="2">
    <location>
        <begin position="452"/>
        <end position="472"/>
    </location>
</feature>
<feature type="transmembrane region" description="Helical" evidence="2">
    <location>
        <begin position="482"/>
        <end position="502"/>
    </location>
</feature>
<feature type="transmembrane region" description="Helical" evidence="2">
    <location>
        <begin position="518"/>
        <end position="540"/>
    </location>
</feature>
<feature type="transmembrane region" description="Helical" evidence="2">
    <location>
        <begin position="547"/>
        <end position="569"/>
    </location>
</feature>
<feature type="splice variant" id="VSP_042415" description="In isoform 2." evidence="3">
    <original>I</original>
    <variation>M</variation>
    <location>
        <position position="591"/>
    </location>
</feature>
<reference key="1">
    <citation type="journal article" date="2005" name="BMC Biol.">
        <title>The sequence of rice chromosomes 11 and 12, rich in disease resistance genes and recent gene duplications.</title>
        <authorList>
            <consortium name="The rice chromosomes 11 and 12 sequencing consortia"/>
        </authorList>
    </citation>
    <scope>NUCLEOTIDE SEQUENCE [LARGE SCALE GENOMIC DNA]</scope>
    <source>
        <strain>cv. Nipponbare</strain>
    </source>
</reference>
<reference key="2">
    <citation type="journal article" date="2005" name="Nature">
        <title>The map-based sequence of the rice genome.</title>
        <authorList>
            <consortium name="International rice genome sequencing project (IRGSP)"/>
        </authorList>
    </citation>
    <scope>NUCLEOTIDE SEQUENCE [LARGE SCALE GENOMIC DNA]</scope>
    <source>
        <strain>cv. Nipponbare</strain>
    </source>
</reference>
<reference key="3">
    <citation type="journal article" date="2008" name="Nucleic Acids Res.">
        <title>The rice annotation project database (RAP-DB): 2008 update.</title>
        <authorList>
            <consortium name="The rice annotation project (RAP)"/>
        </authorList>
    </citation>
    <scope>GENOME REANNOTATION</scope>
    <source>
        <strain>cv. Nipponbare</strain>
    </source>
</reference>
<reference key="4">
    <citation type="journal article" date="2013" name="Rice">
        <title>Improvement of the Oryza sativa Nipponbare reference genome using next generation sequence and optical map data.</title>
        <authorList>
            <person name="Kawahara Y."/>
            <person name="de la Bastide M."/>
            <person name="Hamilton J.P."/>
            <person name="Kanamori H."/>
            <person name="McCombie W.R."/>
            <person name="Ouyang S."/>
            <person name="Schwartz D.C."/>
            <person name="Tanaka T."/>
            <person name="Wu J."/>
            <person name="Zhou S."/>
            <person name="Childs K.L."/>
            <person name="Davidson R.M."/>
            <person name="Lin H."/>
            <person name="Quesada-Ocampo L."/>
            <person name="Vaillancourt B."/>
            <person name="Sakai H."/>
            <person name="Lee S.S."/>
            <person name="Kim J."/>
            <person name="Numa H."/>
            <person name="Itoh T."/>
            <person name="Buell C.R."/>
            <person name="Matsumoto T."/>
        </authorList>
    </citation>
    <scope>GENOME REANNOTATION</scope>
    <source>
        <strain>cv. Nipponbare</strain>
    </source>
</reference>
<reference key="5">
    <citation type="journal article" date="2003" name="Science">
        <title>Collection, mapping, and annotation of over 28,000 cDNA clones from japonica rice.</title>
        <authorList>
            <consortium name="The rice full-length cDNA consortium"/>
        </authorList>
    </citation>
    <scope>NUCLEOTIDE SEQUENCE [LARGE SCALE MRNA] (ISOFORMS 1 AND 2)</scope>
    <source>
        <strain>cv. Nipponbare</strain>
    </source>
</reference>
<proteinExistence type="evidence at transcript level"/>
<evidence type="ECO:0000250" key="1"/>
<evidence type="ECO:0000255" key="2"/>
<evidence type="ECO:0000303" key="3">
    <source>
    </source>
</evidence>
<evidence type="ECO:0000305" key="4"/>
<keyword id="KW-0025">Alternative splicing</keyword>
<keyword id="KW-0150">Chloroplast</keyword>
<keyword id="KW-0406">Ion transport</keyword>
<keyword id="KW-0472">Membrane</keyword>
<keyword id="KW-0934">Plastid</keyword>
<keyword id="KW-1185">Reference proteome</keyword>
<keyword id="KW-0809">Transit peptide</keyword>
<keyword id="KW-0812">Transmembrane</keyword>
<keyword id="KW-1133">Transmembrane helix</keyword>
<keyword id="KW-0813">Transport</keyword>
<comment type="function">
    <text evidence="1">May be involved in iron transport and iron homeostasis.</text>
</comment>
<comment type="subcellular location">
    <subcellularLocation>
        <location evidence="4">Membrane</location>
        <topology evidence="4">Multi-pass membrane protein</topology>
    </subcellularLocation>
    <subcellularLocation>
        <location evidence="4">Plastid</location>
        <location evidence="4">Chloroplast envelope</location>
    </subcellularLocation>
</comment>
<comment type="alternative products">
    <event type="alternative splicing"/>
    <isoform>
        <id>Q2QNK7-1</id>
        <name>1</name>
        <sequence type="displayed"/>
    </isoform>
    <isoform>
        <id>Q2QNK7-2</id>
        <name>2</name>
        <sequence type="described" ref="VSP_042415"/>
    </isoform>
</comment>
<comment type="similarity">
    <text evidence="4">Belongs to the ferroportin (FP) (TC 2.A.100) family. SLC40A subfamily.</text>
</comment>
<comment type="sequence caution" evidence="4">
    <conflict type="erroneous gene model prediction">
        <sequence resource="EMBL-CDS" id="ABA98948"/>
    </conflict>
</comment>